<organism>
    <name type="scientific">Mycoplasma genitalium (strain ATCC 33530 / DSM 19775 / NCTC 10195 / G37)</name>
    <name type="common">Mycoplasmoides genitalium</name>
    <dbReference type="NCBI Taxonomy" id="243273"/>
    <lineage>
        <taxon>Bacteria</taxon>
        <taxon>Bacillati</taxon>
        <taxon>Mycoplasmatota</taxon>
        <taxon>Mycoplasmoidales</taxon>
        <taxon>Mycoplasmoidaceae</taxon>
        <taxon>Mycoplasmoides</taxon>
    </lineage>
</organism>
<keyword id="KW-1185">Reference proteome</keyword>
<keyword id="KW-0687">Ribonucleoprotein</keyword>
<keyword id="KW-0689">Ribosomal protein</keyword>
<keyword id="KW-0694">RNA-binding</keyword>
<keyword id="KW-0699">rRNA-binding</keyword>
<sequence length="150" mass="17380">MKIILKQDVAKLGKRFDVVEVKDGFAIHFLFPKKLAAPLTKKAIANRDLFLKQQQEQYQKNRALAEKLKLVIEQTPLTFQLKQHDGKPYGSIITKQIINLAKQQRLDLQRFMFKDNVRLQFGEHKLILHLFEEITATLTVIVNPENGTTN</sequence>
<proteinExistence type="inferred from homology"/>
<comment type="function">
    <text evidence="1">Binds to the 23S rRNA.</text>
</comment>
<comment type="similarity">
    <text evidence="1">Belongs to the bacterial ribosomal protein bL9 family.</text>
</comment>
<name>RL9_MYCGE</name>
<gene>
    <name evidence="1" type="primary">rplI</name>
    <name evidence="1" type="synonym">rpl9</name>
    <name type="ordered locus">MG093</name>
</gene>
<accession>P47339</accession>
<dbReference type="EMBL" id="L43967">
    <property type="protein sequence ID" value="AAC71311.1"/>
    <property type="molecule type" value="Genomic_DNA"/>
</dbReference>
<dbReference type="PIR" id="C64210">
    <property type="entry name" value="C64210"/>
</dbReference>
<dbReference type="RefSeq" id="WP_009885649.1">
    <property type="nucleotide sequence ID" value="NC_000908.2"/>
</dbReference>
<dbReference type="SMR" id="P47339"/>
<dbReference type="FunCoup" id="P47339">
    <property type="interactions" value="211"/>
</dbReference>
<dbReference type="STRING" id="243273.MG_093"/>
<dbReference type="GeneID" id="88282216"/>
<dbReference type="KEGG" id="mge:MG_093"/>
<dbReference type="eggNOG" id="COG0359">
    <property type="taxonomic scope" value="Bacteria"/>
</dbReference>
<dbReference type="HOGENOM" id="CLU_078938_3_0_14"/>
<dbReference type="InParanoid" id="P47339"/>
<dbReference type="OrthoDB" id="9788336at2"/>
<dbReference type="BioCyc" id="MGEN243273:G1GJ2-105-MONOMER"/>
<dbReference type="Proteomes" id="UP000000807">
    <property type="component" value="Chromosome"/>
</dbReference>
<dbReference type="GO" id="GO:0022625">
    <property type="term" value="C:cytosolic large ribosomal subunit"/>
    <property type="evidence" value="ECO:0000318"/>
    <property type="project" value="GO_Central"/>
</dbReference>
<dbReference type="GO" id="GO:0019843">
    <property type="term" value="F:rRNA binding"/>
    <property type="evidence" value="ECO:0007669"/>
    <property type="project" value="UniProtKB-UniRule"/>
</dbReference>
<dbReference type="GO" id="GO:0003735">
    <property type="term" value="F:structural constituent of ribosome"/>
    <property type="evidence" value="ECO:0007669"/>
    <property type="project" value="InterPro"/>
</dbReference>
<dbReference type="GO" id="GO:0006412">
    <property type="term" value="P:translation"/>
    <property type="evidence" value="ECO:0007669"/>
    <property type="project" value="UniProtKB-UniRule"/>
</dbReference>
<dbReference type="Gene3D" id="3.10.430.100">
    <property type="entry name" value="Ribosomal protein L9, C-terminal domain"/>
    <property type="match status" value="1"/>
</dbReference>
<dbReference type="Gene3D" id="3.40.5.10">
    <property type="entry name" value="Ribosomal protein L9, N-terminal domain"/>
    <property type="match status" value="1"/>
</dbReference>
<dbReference type="HAMAP" id="MF_00503">
    <property type="entry name" value="Ribosomal_bL9"/>
    <property type="match status" value="1"/>
</dbReference>
<dbReference type="InterPro" id="IPR000244">
    <property type="entry name" value="Ribosomal_bL9"/>
</dbReference>
<dbReference type="InterPro" id="IPR009027">
    <property type="entry name" value="Ribosomal_bL9/RNase_H1_N"/>
</dbReference>
<dbReference type="InterPro" id="IPR020594">
    <property type="entry name" value="Ribosomal_bL9_bac/chp"/>
</dbReference>
<dbReference type="InterPro" id="IPR020069">
    <property type="entry name" value="Ribosomal_bL9_C"/>
</dbReference>
<dbReference type="InterPro" id="IPR036791">
    <property type="entry name" value="Ribosomal_bL9_C_sf"/>
</dbReference>
<dbReference type="InterPro" id="IPR020070">
    <property type="entry name" value="Ribosomal_bL9_N"/>
</dbReference>
<dbReference type="InterPro" id="IPR036935">
    <property type="entry name" value="Ribosomal_bL9_N_sf"/>
</dbReference>
<dbReference type="NCBIfam" id="TIGR00158">
    <property type="entry name" value="L9"/>
    <property type="match status" value="1"/>
</dbReference>
<dbReference type="PANTHER" id="PTHR21368">
    <property type="entry name" value="50S RIBOSOMAL PROTEIN L9"/>
    <property type="match status" value="1"/>
</dbReference>
<dbReference type="Pfam" id="PF03948">
    <property type="entry name" value="Ribosomal_L9_C"/>
    <property type="match status" value="1"/>
</dbReference>
<dbReference type="Pfam" id="PF01281">
    <property type="entry name" value="Ribosomal_L9_N"/>
    <property type="match status" value="1"/>
</dbReference>
<dbReference type="SUPFAM" id="SSF55658">
    <property type="entry name" value="L9 N-domain-like"/>
    <property type="match status" value="1"/>
</dbReference>
<dbReference type="SUPFAM" id="SSF55653">
    <property type="entry name" value="Ribosomal protein L9 C-domain"/>
    <property type="match status" value="1"/>
</dbReference>
<dbReference type="PROSITE" id="PS00651">
    <property type="entry name" value="RIBOSOMAL_L9"/>
    <property type="match status" value="1"/>
</dbReference>
<evidence type="ECO:0000255" key="1">
    <source>
        <dbReference type="HAMAP-Rule" id="MF_00503"/>
    </source>
</evidence>
<evidence type="ECO:0000305" key="2"/>
<feature type="chain" id="PRO_0000176651" description="Large ribosomal subunit protein bL9">
    <location>
        <begin position="1"/>
        <end position="150"/>
    </location>
</feature>
<protein>
    <recommendedName>
        <fullName evidence="1">Large ribosomal subunit protein bL9</fullName>
    </recommendedName>
    <alternativeName>
        <fullName evidence="2">50S ribosomal protein L9</fullName>
    </alternativeName>
</protein>
<reference key="1">
    <citation type="journal article" date="1995" name="Science">
        <title>The minimal gene complement of Mycoplasma genitalium.</title>
        <authorList>
            <person name="Fraser C.M."/>
            <person name="Gocayne J.D."/>
            <person name="White O."/>
            <person name="Adams M.D."/>
            <person name="Clayton R.A."/>
            <person name="Fleischmann R.D."/>
            <person name="Bult C.J."/>
            <person name="Kerlavage A.R."/>
            <person name="Sutton G.G."/>
            <person name="Kelley J.M."/>
            <person name="Fritchman J.L."/>
            <person name="Weidman J.F."/>
            <person name="Small K.V."/>
            <person name="Sandusky M."/>
            <person name="Fuhrmann J.L."/>
            <person name="Nguyen D.T."/>
            <person name="Utterback T.R."/>
            <person name="Saudek D.M."/>
            <person name="Phillips C.A."/>
            <person name="Merrick J.M."/>
            <person name="Tomb J.-F."/>
            <person name="Dougherty B.A."/>
            <person name="Bott K.F."/>
            <person name="Hu P.-C."/>
            <person name="Lucier T.S."/>
            <person name="Peterson S.N."/>
            <person name="Smith H.O."/>
            <person name="Hutchison C.A. III"/>
            <person name="Venter J.C."/>
        </authorList>
    </citation>
    <scope>NUCLEOTIDE SEQUENCE [LARGE SCALE GENOMIC DNA]</scope>
    <source>
        <strain>ATCC 33530 / DSM 19775 / NCTC 10195 / G37</strain>
    </source>
</reference>